<evidence type="ECO:0000250" key="1">
    <source>
        <dbReference type="UniProtKB" id="P56181"/>
    </source>
</evidence>
<evidence type="ECO:0000256" key="2">
    <source>
        <dbReference type="SAM" id="MobiDB-lite"/>
    </source>
</evidence>
<evidence type="ECO:0000269" key="3">
    <source>
    </source>
</evidence>
<evidence type="ECO:0000269" key="4">
    <source>
    </source>
</evidence>
<evidence type="ECO:0000305" key="5"/>
<evidence type="ECO:0000305" key="6">
    <source>
    </source>
</evidence>
<evidence type="ECO:0007829" key="7">
    <source>
        <dbReference type="PDB" id="7QSM"/>
    </source>
</evidence>
<proteinExistence type="evidence at protein level"/>
<dbReference type="EMBL" id="X59048">
    <property type="protein sequence ID" value="CAA41775.1"/>
    <property type="molecule type" value="mRNA"/>
</dbReference>
<dbReference type="EMBL" id="BC103274">
    <property type="protein sequence ID" value="AAI03275.1"/>
    <property type="molecule type" value="mRNA"/>
</dbReference>
<dbReference type="PIR" id="S15107">
    <property type="entry name" value="S15107"/>
</dbReference>
<dbReference type="RefSeq" id="NP_787024.1">
    <property type="nucleotide sequence ID" value="NM_175830.2"/>
</dbReference>
<dbReference type="PDB" id="5LNK">
    <property type="method" value="EM"/>
    <property type="resolution" value="3.90 A"/>
    <property type="chains" value="a=35-109"/>
</dbReference>
<dbReference type="PDB" id="5O31">
    <property type="method" value="EM"/>
    <property type="resolution" value="4.13 A"/>
    <property type="chains" value="s=35-109"/>
</dbReference>
<dbReference type="PDB" id="7DGQ">
    <property type="method" value="EM"/>
    <property type="resolution" value="5.00 A"/>
    <property type="chains" value="F=35-109"/>
</dbReference>
<dbReference type="PDB" id="7DGR">
    <property type="method" value="EM"/>
    <property type="resolution" value="4.60 A"/>
    <property type="chains" value="F=35-109"/>
</dbReference>
<dbReference type="PDB" id="7DGS">
    <property type="method" value="EM"/>
    <property type="resolution" value="7.80 A"/>
    <property type="chains" value="F=35-109"/>
</dbReference>
<dbReference type="PDB" id="7DGZ">
    <property type="method" value="EM"/>
    <property type="resolution" value="3.80 A"/>
    <property type="chains" value="F=35-109"/>
</dbReference>
<dbReference type="PDB" id="7DH0">
    <property type="method" value="EM"/>
    <property type="resolution" value="4.20 A"/>
    <property type="chains" value="F=35-109"/>
</dbReference>
<dbReference type="PDB" id="7DKF">
    <property type="method" value="EM"/>
    <property type="resolution" value="8.30 A"/>
    <property type="chains" value="F2=35-109"/>
</dbReference>
<dbReference type="PDB" id="7QSD">
    <property type="method" value="EM"/>
    <property type="resolution" value="3.10 A"/>
    <property type="chains" value="s=1-109"/>
</dbReference>
<dbReference type="PDB" id="7QSK">
    <property type="method" value="EM"/>
    <property type="resolution" value="2.84 A"/>
    <property type="chains" value="s=1-109"/>
</dbReference>
<dbReference type="PDB" id="7QSL">
    <property type="method" value="EM"/>
    <property type="resolution" value="2.76 A"/>
    <property type="chains" value="s=1-109"/>
</dbReference>
<dbReference type="PDB" id="7QSM">
    <property type="method" value="EM"/>
    <property type="resolution" value="2.30 A"/>
    <property type="chains" value="s=1-109"/>
</dbReference>
<dbReference type="PDB" id="7QSN">
    <property type="method" value="EM"/>
    <property type="resolution" value="2.81 A"/>
    <property type="chains" value="s=1-109"/>
</dbReference>
<dbReference type="PDB" id="7QSO">
    <property type="method" value="EM"/>
    <property type="resolution" value="3.02 A"/>
    <property type="chains" value="s=1-109"/>
</dbReference>
<dbReference type="PDB" id="7R41">
    <property type="method" value="EM"/>
    <property type="resolution" value="2.30 A"/>
    <property type="chains" value="s=1-109"/>
</dbReference>
<dbReference type="PDB" id="7R42">
    <property type="method" value="EM"/>
    <property type="resolution" value="2.30 A"/>
    <property type="chains" value="s=1-109"/>
</dbReference>
<dbReference type="PDB" id="7R43">
    <property type="method" value="EM"/>
    <property type="resolution" value="2.40 A"/>
    <property type="chains" value="s=1-109"/>
</dbReference>
<dbReference type="PDB" id="7R44">
    <property type="method" value="EM"/>
    <property type="resolution" value="2.40 A"/>
    <property type="chains" value="s=1-109"/>
</dbReference>
<dbReference type="PDB" id="7R45">
    <property type="method" value="EM"/>
    <property type="resolution" value="2.40 A"/>
    <property type="chains" value="s=1-109"/>
</dbReference>
<dbReference type="PDB" id="7R46">
    <property type="method" value="EM"/>
    <property type="resolution" value="2.40 A"/>
    <property type="chains" value="s=1-109"/>
</dbReference>
<dbReference type="PDB" id="7R47">
    <property type="method" value="EM"/>
    <property type="resolution" value="2.30 A"/>
    <property type="chains" value="s=1-109"/>
</dbReference>
<dbReference type="PDB" id="7R48">
    <property type="method" value="EM"/>
    <property type="resolution" value="2.30 A"/>
    <property type="chains" value="s=1-109"/>
</dbReference>
<dbReference type="PDB" id="7R4C">
    <property type="method" value="EM"/>
    <property type="resolution" value="2.30 A"/>
    <property type="chains" value="s=1-109"/>
</dbReference>
<dbReference type="PDB" id="7R4D">
    <property type="method" value="EM"/>
    <property type="resolution" value="2.30 A"/>
    <property type="chains" value="s=1-109"/>
</dbReference>
<dbReference type="PDB" id="7R4F">
    <property type="method" value="EM"/>
    <property type="resolution" value="2.40 A"/>
    <property type="chains" value="s=1-109"/>
</dbReference>
<dbReference type="PDB" id="7R4G">
    <property type="method" value="EM"/>
    <property type="resolution" value="2.50 A"/>
    <property type="chains" value="s=1-109"/>
</dbReference>
<dbReference type="PDB" id="8Q0A">
    <property type="method" value="EM"/>
    <property type="resolution" value="3.10 A"/>
    <property type="chains" value="s=1-109"/>
</dbReference>
<dbReference type="PDB" id="8Q0F">
    <property type="method" value="EM"/>
    <property type="resolution" value="3.10 A"/>
    <property type="chains" value="s=1-109"/>
</dbReference>
<dbReference type="PDB" id="8Q0J">
    <property type="method" value="EM"/>
    <property type="resolution" value="3.80 A"/>
    <property type="chains" value="s=1-109"/>
</dbReference>
<dbReference type="PDB" id="8Q0M">
    <property type="method" value="EM"/>
    <property type="resolution" value="3.10 A"/>
    <property type="chains" value="s=1-109"/>
</dbReference>
<dbReference type="PDB" id="8Q0O">
    <property type="method" value="EM"/>
    <property type="resolution" value="3.10 A"/>
    <property type="chains" value="s=1-109"/>
</dbReference>
<dbReference type="PDB" id="8Q0Q">
    <property type="method" value="EM"/>
    <property type="resolution" value="3.60 A"/>
    <property type="chains" value="s=1-109"/>
</dbReference>
<dbReference type="PDB" id="8Q1P">
    <property type="method" value="EM"/>
    <property type="resolution" value="2.90 A"/>
    <property type="chains" value="s=1-109"/>
</dbReference>
<dbReference type="PDB" id="8Q1U">
    <property type="method" value="EM"/>
    <property type="resolution" value="3.30 A"/>
    <property type="chains" value="s=1-109"/>
</dbReference>
<dbReference type="PDB" id="8Q1Y">
    <property type="method" value="EM"/>
    <property type="resolution" value="2.60 A"/>
    <property type="chains" value="s=1-109"/>
</dbReference>
<dbReference type="PDB" id="8Q25">
    <property type="method" value="EM"/>
    <property type="resolution" value="2.80 A"/>
    <property type="chains" value="s=1-109"/>
</dbReference>
<dbReference type="PDB" id="8Q45">
    <property type="method" value="EM"/>
    <property type="resolution" value="2.70 A"/>
    <property type="chains" value="s=1-109"/>
</dbReference>
<dbReference type="PDB" id="8Q46">
    <property type="method" value="EM"/>
    <property type="resolution" value="2.60 A"/>
    <property type="chains" value="s=1-109"/>
</dbReference>
<dbReference type="PDB" id="8Q47">
    <property type="method" value="EM"/>
    <property type="resolution" value="2.90 A"/>
    <property type="chains" value="s=1-109"/>
</dbReference>
<dbReference type="PDB" id="8Q48">
    <property type="method" value="EM"/>
    <property type="resolution" value="2.50 A"/>
    <property type="chains" value="s=1-109"/>
</dbReference>
<dbReference type="PDB" id="8Q49">
    <property type="method" value="EM"/>
    <property type="resolution" value="2.60 A"/>
    <property type="chains" value="s=1-109"/>
</dbReference>
<dbReference type="PDB" id="8Q4A">
    <property type="method" value="EM"/>
    <property type="resolution" value="2.60 A"/>
    <property type="chains" value="s=1-109"/>
</dbReference>
<dbReference type="PDBsum" id="5LNK"/>
<dbReference type="PDBsum" id="5O31"/>
<dbReference type="PDBsum" id="7DGQ"/>
<dbReference type="PDBsum" id="7DGR"/>
<dbReference type="PDBsum" id="7DGS"/>
<dbReference type="PDBsum" id="7DGZ"/>
<dbReference type="PDBsum" id="7DH0"/>
<dbReference type="PDBsum" id="7DKF"/>
<dbReference type="PDBsum" id="7QSD"/>
<dbReference type="PDBsum" id="7QSK"/>
<dbReference type="PDBsum" id="7QSL"/>
<dbReference type="PDBsum" id="7QSM"/>
<dbReference type="PDBsum" id="7QSN"/>
<dbReference type="PDBsum" id="7QSO"/>
<dbReference type="PDBsum" id="7R41"/>
<dbReference type="PDBsum" id="7R42"/>
<dbReference type="PDBsum" id="7R43"/>
<dbReference type="PDBsum" id="7R44"/>
<dbReference type="PDBsum" id="7R45"/>
<dbReference type="PDBsum" id="7R46"/>
<dbReference type="PDBsum" id="7R47"/>
<dbReference type="PDBsum" id="7R48"/>
<dbReference type="PDBsum" id="7R4C"/>
<dbReference type="PDBsum" id="7R4D"/>
<dbReference type="PDBsum" id="7R4F"/>
<dbReference type="PDBsum" id="7R4G"/>
<dbReference type="PDBsum" id="8Q0A"/>
<dbReference type="PDBsum" id="8Q0F"/>
<dbReference type="PDBsum" id="8Q0J"/>
<dbReference type="PDBsum" id="8Q0M"/>
<dbReference type="PDBsum" id="8Q0O"/>
<dbReference type="PDBsum" id="8Q0Q"/>
<dbReference type="PDBsum" id="8Q1P"/>
<dbReference type="PDBsum" id="8Q1U"/>
<dbReference type="PDBsum" id="8Q1Y"/>
<dbReference type="PDBsum" id="8Q25"/>
<dbReference type="PDBsum" id="8Q45"/>
<dbReference type="PDBsum" id="8Q46"/>
<dbReference type="PDBsum" id="8Q47"/>
<dbReference type="PDBsum" id="8Q48"/>
<dbReference type="PDBsum" id="8Q49"/>
<dbReference type="PDBsum" id="8Q4A"/>
<dbReference type="EMDB" id="EMD-14127"/>
<dbReference type="EMDB" id="EMD-14132"/>
<dbReference type="EMDB" id="EMD-14133"/>
<dbReference type="EMDB" id="EMD-14134"/>
<dbReference type="EMDB" id="EMD-14139"/>
<dbReference type="EMDB" id="EMD-14140"/>
<dbReference type="EMDB" id="EMD-14251"/>
<dbReference type="EMDB" id="EMD-14256"/>
<dbReference type="EMDB" id="EMD-14261"/>
<dbReference type="EMDB" id="EMD-14266"/>
<dbReference type="EMDB" id="EMD-14272"/>
<dbReference type="EMDB" id="EMD-14277"/>
<dbReference type="EMDB" id="EMD-14282"/>
<dbReference type="EMDB" id="EMD-14287"/>
<dbReference type="EMDB" id="EMD-14292"/>
<dbReference type="EMDB" id="EMD-14297"/>
<dbReference type="EMDB" id="EMD-14302"/>
<dbReference type="EMDB" id="EMD-14307"/>
<dbReference type="EMDB" id="EMD-18051"/>
<dbReference type="EMDB" id="EMD-18052"/>
<dbReference type="EMDB" id="EMD-18054"/>
<dbReference type="EMDB" id="EMD-18055"/>
<dbReference type="EMDB" id="EMD-18057"/>
<dbReference type="EMDB" id="EMD-18059"/>
<dbReference type="EMDB" id="EMD-18066"/>
<dbReference type="EMDB" id="EMD-18067"/>
<dbReference type="EMDB" id="EMD-18068"/>
<dbReference type="EMDB" id="EMD-18069"/>
<dbReference type="EMDB" id="EMD-18138"/>
<dbReference type="EMDB" id="EMD-18139"/>
<dbReference type="EMDB" id="EMD-18140"/>
<dbReference type="EMDB" id="EMD-18141"/>
<dbReference type="EMDB" id="EMD-18142"/>
<dbReference type="EMDB" id="EMD-18143"/>
<dbReference type="EMDB" id="EMD-30673"/>
<dbReference type="EMDB" id="EMD-30674"/>
<dbReference type="EMDB" id="EMD-30675"/>
<dbReference type="EMDB" id="EMD-30676"/>
<dbReference type="EMDB" id="EMD-30677"/>
<dbReference type="EMDB" id="EMD-30706"/>
<dbReference type="EMDB" id="EMD-3731"/>
<dbReference type="SMR" id="P25712"/>
<dbReference type="CORUM" id="P25712"/>
<dbReference type="DIP" id="DIP-38824N"/>
<dbReference type="FunCoup" id="P25712">
    <property type="interactions" value="538"/>
</dbReference>
<dbReference type="IntAct" id="P25712">
    <property type="interactions" value="2"/>
</dbReference>
<dbReference type="STRING" id="9913.ENSBTAP00000066736"/>
<dbReference type="TCDB" id="3.D.1.6.1">
    <property type="family name" value="the h+ or na+-translocating nadh dehydrogenase (ndh) family"/>
</dbReference>
<dbReference type="PaxDb" id="9913-ENSBTAP00000041265"/>
<dbReference type="GeneID" id="327717"/>
<dbReference type="KEGG" id="bta:327717"/>
<dbReference type="CTD" id="4731"/>
<dbReference type="eggNOG" id="ENOG502S46A">
    <property type="taxonomic scope" value="Eukaryota"/>
</dbReference>
<dbReference type="HOGENOM" id="CLU_2157565_0_0_1"/>
<dbReference type="InParanoid" id="P25712"/>
<dbReference type="OrthoDB" id="6161911at2759"/>
<dbReference type="Proteomes" id="UP000009136">
    <property type="component" value="Unplaced"/>
</dbReference>
<dbReference type="GO" id="GO:0005743">
    <property type="term" value="C:mitochondrial inner membrane"/>
    <property type="evidence" value="ECO:0007669"/>
    <property type="project" value="UniProtKB-SubCell"/>
</dbReference>
<dbReference type="GO" id="GO:0005739">
    <property type="term" value="C:mitochondrion"/>
    <property type="evidence" value="ECO:0000305"/>
    <property type="project" value="UniProtKB"/>
</dbReference>
<dbReference type="GO" id="GO:0045271">
    <property type="term" value="C:respiratory chain complex I"/>
    <property type="evidence" value="ECO:0000314"/>
    <property type="project" value="UniProtKB"/>
</dbReference>
<dbReference type="GO" id="GO:0042775">
    <property type="term" value="P:mitochondrial ATP synthesis coupled electron transport"/>
    <property type="evidence" value="ECO:0000318"/>
    <property type="project" value="GO_Central"/>
</dbReference>
<dbReference type="InterPro" id="IPR026193">
    <property type="entry name" value="NDUFV3"/>
</dbReference>
<dbReference type="PANTHER" id="PTHR17117:SF1">
    <property type="entry name" value="NADH DEHYDROGENASE [UBIQUINONE] FLAVOPROTEIN 3, MITOCHONDRIAL"/>
    <property type="match status" value="1"/>
</dbReference>
<dbReference type="PANTHER" id="PTHR17117">
    <property type="entry name" value="NADH-UBIQUINONE OXIDOREDUCTASE"/>
    <property type="match status" value="1"/>
</dbReference>
<dbReference type="Pfam" id="PF15880">
    <property type="entry name" value="NDUFV3"/>
    <property type="match status" value="1"/>
</dbReference>
<keyword id="KW-0002">3D-structure</keyword>
<keyword id="KW-0903">Direct protein sequencing</keyword>
<keyword id="KW-0249">Electron transport</keyword>
<keyword id="KW-0472">Membrane</keyword>
<keyword id="KW-0496">Mitochondrion</keyword>
<keyword id="KW-0999">Mitochondrion inner membrane</keyword>
<keyword id="KW-0597">Phosphoprotein</keyword>
<keyword id="KW-1185">Reference proteome</keyword>
<keyword id="KW-0679">Respiratory chain</keyword>
<keyword id="KW-0809">Transit peptide</keyword>
<keyword id="KW-0813">Transport</keyword>
<comment type="function">
    <text evidence="1">Accessory subunit of the mitochondrial membrane respiratory chain NADH dehydrogenase (Complex I), that is believed not to be involved in catalysis. Complex I functions in the transfer of electrons from NADH to the respiratory chain. The immediate electron acceptor for the enzyme is believed to be ubiquinone. May be the terminally assembled subunit of Complex I.</text>
</comment>
<comment type="subunit">
    <text evidence="4">Complex I is composed of 45 different subunits. This is a component of the flavoprotein-sulfur (FP) fragment of the enzyme.</text>
</comment>
<comment type="subcellular location">
    <subcellularLocation>
        <location evidence="6">Mitochondrion inner membrane</location>
        <topology evidence="5">Peripheral membrane protein</topology>
        <orientation evidence="5">Matrix side</orientation>
    </subcellularLocation>
</comment>
<comment type="similarity">
    <text evidence="5">Belongs to the complex I NDUFV3 subunit family.</text>
</comment>
<protein>
    <recommendedName>
        <fullName>NADH dehydrogenase [ubiquinone] flavoprotein 3, mitochondrial</fullName>
    </recommendedName>
    <alternativeName>
        <fullName>Complex I-9kD</fullName>
        <shortName>CI-9kD</shortName>
    </alternativeName>
    <alternativeName>
        <fullName>NADH-ubiquinone oxidoreductase 9 kDa subunit</fullName>
    </alternativeName>
</protein>
<accession>P25712</accession>
<accession>Q3SZ08</accession>
<organism>
    <name type="scientific">Bos taurus</name>
    <name type="common">Bovine</name>
    <dbReference type="NCBI Taxonomy" id="9913"/>
    <lineage>
        <taxon>Eukaryota</taxon>
        <taxon>Metazoa</taxon>
        <taxon>Chordata</taxon>
        <taxon>Craniata</taxon>
        <taxon>Vertebrata</taxon>
        <taxon>Euteleostomi</taxon>
        <taxon>Mammalia</taxon>
        <taxon>Eutheria</taxon>
        <taxon>Laurasiatheria</taxon>
        <taxon>Artiodactyla</taxon>
        <taxon>Ruminantia</taxon>
        <taxon>Pecora</taxon>
        <taxon>Bovidae</taxon>
        <taxon>Bovinae</taxon>
        <taxon>Bos</taxon>
    </lineage>
</organism>
<reference key="1">
    <citation type="journal article" date="1991" name="FEBS Lett.">
        <title>NADH:ubiquinone oxidoreductase from bovine heart mitochondria. cDNA sequence of the import precursor of the 10 kDa subunit of the flavoprotein fragment.</title>
        <authorList>
            <person name="Skehel J.M."/>
            <person name="Pilkington S.J."/>
            <person name="Runswick M.J."/>
            <person name="Fearnley I.M."/>
            <person name="Walker J.E."/>
        </authorList>
    </citation>
    <scope>NUCLEOTIDE SEQUENCE [MRNA]</scope>
    <source>
        <tissue>Heart</tissue>
    </source>
</reference>
<reference key="2">
    <citation type="submission" date="2005-08" db="EMBL/GenBank/DDBJ databases">
        <authorList>
            <consortium name="NIH - Mammalian Gene Collection (MGC) project"/>
        </authorList>
    </citation>
    <scope>NUCLEOTIDE SEQUENCE [LARGE SCALE MRNA]</scope>
    <source>
        <strain>Hereford</strain>
        <tissue>Heart ventricle</tissue>
    </source>
</reference>
<reference key="3">
    <citation type="journal article" date="1991" name="J. Biochem.">
        <title>The amino acid sequence of the 9 kDa polypeptide and partial amino acid sequence of the 20 kDa polypeptide of mitochondrial NADH:ubiquinone oxidoreductase.</title>
        <authorList>
            <person name="Masui R."/>
            <person name="Wakabayashi S."/>
            <person name="Matsubara H."/>
            <person name="Hatefi Y."/>
        </authorList>
    </citation>
    <scope>PROTEIN SEQUENCE OF 35-109</scope>
</reference>
<reference key="4">
    <citation type="journal article" date="2008" name="Anal. Biochem.">
        <title>Subunit analysis of bovine heart complex I by reversed-phase high-performance liquid chromatography, electrospray ionization-tandem mass spectrometry, and matrix-assisted laser desorption/ionization-time-of-flight mass spectrometry.</title>
        <authorList>
            <person name="Lemma-Gray P."/>
            <person name="Valusova E."/>
            <person name="Carroll C.A."/>
            <person name="Weintraub S.T."/>
            <person name="Musatov A."/>
            <person name="Robinson N.C."/>
        </authorList>
    </citation>
    <scope>SUBUNIT</scope>
    <scope>IDENTIFICATION IN COMPLEX I</scope>
    <scope>SUBCELLULAR LOCATION</scope>
</reference>
<feature type="transit peptide" description="Mitochondrion" evidence="3">
    <location>
        <begin position="1"/>
        <end position="34"/>
    </location>
</feature>
<feature type="chain" id="PRO_0000020024" description="NADH dehydrogenase [ubiquinone] flavoprotein 3, mitochondrial">
    <location>
        <begin position="35"/>
        <end position="109"/>
    </location>
</feature>
<feature type="region of interest" description="Disordered" evidence="2">
    <location>
        <begin position="33"/>
        <end position="72"/>
    </location>
</feature>
<feature type="modified residue" description="Phosphoserine" evidence="1">
    <location>
        <position position="106"/>
    </location>
</feature>
<feature type="sequence conflict" description="In Ref. 2; AAI03275." evidence="5" ref="2">
    <original>N</original>
    <variation>D</variation>
    <location>
        <position position="48"/>
    </location>
</feature>
<feature type="helix" evidence="7">
    <location>
        <begin position="76"/>
        <end position="79"/>
    </location>
</feature>
<feature type="helix" evidence="7">
    <location>
        <begin position="84"/>
        <end position="92"/>
    </location>
</feature>
<feature type="helix" evidence="7">
    <location>
        <begin position="93"/>
        <end position="95"/>
    </location>
</feature>
<feature type="strand" evidence="7">
    <location>
        <begin position="103"/>
        <end position="105"/>
    </location>
</feature>
<sequence>MAASLLLRQGRAGALKTVLLEAGVFRGVAPAVSLSAESGKNEKGLPPNPKKQSPPKKPVSAAPTEPFDNTTYKNLQHHDYSTYTFLDLNLDLSKFRMPQPSSGRESPRH</sequence>
<name>NDUV3_BOVIN</name>
<gene>
    <name type="primary">NDUFV3</name>
</gene>